<protein>
    <recommendedName>
        <fullName evidence="5">(R,R)-butanediol dehydrogenase</fullName>
        <shortName evidence="4">BDH</shortName>
        <ecNumber evidence="3">1.1.1.4</ecNumber>
    </recommendedName>
    <alternativeName>
        <fullName evidence="4">(2R,3R)-2,3-butanediol dehydrogenase</fullName>
        <shortName evidence="4">(2R,3R)-BDH</shortName>
        <shortName evidence="4">NgBDH</shortName>
    </alternativeName>
    <alternativeName>
        <fullName evidence="4">Acetoin/diacetyl reductase</fullName>
    </alternativeName>
</protein>
<evidence type="ECO:0000250" key="1">
    <source>
        <dbReference type="UniProtKB" id="O34788"/>
    </source>
</evidence>
<evidence type="ECO:0000255" key="2"/>
<evidence type="ECO:0000269" key="3">
    <source>
    </source>
</evidence>
<evidence type="ECO:0000303" key="4">
    <source>
    </source>
</evidence>
<evidence type="ECO:0000305" key="5"/>
<evidence type="ECO:0000312" key="6">
    <source>
        <dbReference type="EMBL" id="AAW88941.1"/>
    </source>
</evidence>
<comment type="function">
    <text evidence="3">NAD-dependent butanediol dehydrogenase which catalyzes the oxidation of (R,R)-butane-2,3-diol to (3R)-acetoin and of meso-butane-2,3-diol to (3S)-acetoin (PubMed:33763825). Preferentially oxidizes (R,R)-butane-2,3-diol, with a catalytic efficiency approximately fourfold higher than with meso-butane-2,3-diol (PubMed:33763825). Shows a very low activity with (S,S)-butane-2,3-diol (PubMed:33763825). Can also catalyze the reduction of (3R/3S)-acetoin and diacetyl in the presence of NADH (PubMed:33763825).</text>
</comment>
<comment type="catalytic activity">
    <reaction evidence="3">
        <text>(R,R)-butane-2,3-diol + NAD(+) = (R)-acetoin + NADH + H(+)</text>
        <dbReference type="Rhea" id="RHEA:24340"/>
        <dbReference type="ChEBI" id="CHEBI:15378"/>
        <dbReference type="ChEBI" id="CHEBI:15686"/>
        <dbReference type="ChEBI" id="CHEBI:16982"/>
        <dbReference type="ChEBI" id="CHEBI:57540"/>
        <dbReference type="ChEBI" id="CHEBI:57945"/>
        <dbReference type="EC" id="1.1.1.4"/>
    </reaction>
</comment>
<comment type="catalytic activity">
    <reaction evidence="3">
        <text>(S)-acetoin + NAD(+) = diacetyl + NADH + H(+)</text>
        <dbReference type="Rhea" id="RHEA:27286"/>
        <dbReference type="ChEBI" id="CHEBI:15378"/>
        <dbReference type="ChEBI" id="CHEBI:15687"/>
        <dbReference type="ChEBI" id="CHEBI:16583"/>
        <dbReference type="ChEBI" id="CHEBI:57540"/>
        <dbReference type="ChEBI" id="CHEBI:57945"/>
    </reaction>
</comment>
<comment type="cofactor">
    <cofactor evidence="3">
        <name>Zn(2+)</name>
        <dbReference type="ChEBI" id="CHEBI:29105"/>
    </cofactor>
    <text evidence="3">Binds 1 Zn(2+) per subunit.</text>
</comment>
<comment type="biophysicochemical properties">
    <kinetics>
        <KM evidence="3">0.16 mM for (R,R)-butane-2,3-diol</KM>
        <KM evidence="3">0.72 mM for meso-butane-2,3-diol</KM>
        <KM evidence="3">0.9 mM for NAD(+)</KM>
        <KM evidence="3">0.14 mM for (3R/3S)-acetoin</KM>
        <KM evidence="3">0.15 mM for NADH</KM>
        <text evidence="3">kcat is 102.2 sec(-1) with (R,R)-butane-2,3-diol as substrate. kcat is 115.9 sec(-1) with meso-butane-2,3-diol as substrate. kcat is 124.4 sec(-1) with (3R/3S)-acetoin as substrate.</text>
    </kinetics>
    <phDependence>
        <text evidence="3">Optimum pH is 9.5-11.5 for the oxidation of either (R,R)-butane-2,3-diol or meso-butane-2,3-diol and around 6.5 for the reduction of (3R/3S)-acetoin.</text>
    </phDependence>
    <temperatureDependence>
        <text evidence="3">Optimum temperature is at least 50 degrees Celsius for the oxidation reaction and around 45 degrees Celsius for the reduction of (3R/3S)-acetoin.</text>
    </temperatureDependence>
</comment>
<comment type="similarity">
    <text evidence="5">Belongs to the zinc-containing alcohol dehydrogenase family.</text>
</comment>
<gene>
    <name evidence="4" type="primary">budC</name>
    <name evidence="6" type="ordered locus">NGO_0186</name>
</gene>
<organism>
    <name type="scientific">Neisseria gonorrhoeae (strain ATCC 700825 / FA 1090)</name>
    <dbReference type="NCBI Taxonomy" id="242231"/>
    <lineage>
        <taxon>Bacteria</taxon>
        <taxon>Pseudomonadati</taxon>
        <taxon>Pseudomonadota</taxon>
        <taxon>Betaproteobacteria</taxon>
        <taxon>Neisseriales</taxon>
        <taxon>Neisseriaceae</taxon>
        <taxon>Neisseria</taxon>
    </lineage>
</organism>
<feature type="chain" id="PRO_0000457974" description="(R,R)-butanediol dehydrogenase">
    <location>
        <begin position="1"/>
        <end position="354"/>
    </location>
</feature>
<feature type="domain" description="Enoyl reductase (ER)" evidence="2">
    <location>
        <begin position="10"/>
        <end position="350"/>
    </location>
</feature>
<feature type="binding site" evidence="1">
    <location>
        <position position="37"/>
    </location>
    <ligand>
        <name>Zn(2+)</name>
        <dbReference type="ChEBI" id="CHEBI:29105"/>
    </ligand>
</feature>
<feature type="binding site" evidence="1">
    <location>
        <position position="71"/>
    </location>
    <ligand>
        <name>Zn(2+)</name>
        <dbReference type="ChEBI" id="CHEBI:29105"/>
    </ligand>
</feature>
<feature type="binding site" evidence="1">
    <location>
        <position position="157"/>
    </location>
    <ligand>
        <name>Zn(2+)</name>
        <dbReference type="ChEBI" id="CHEBI:29105"/>
    </ligand>
</feature>
<proteinExistence type="evidence at protein level"/>
<sequence>MKAARFYNKGDIRIEDIPEPTVAPGTVGINVAWCGICGTDLHEFMEGPIFIPPCGHPHPISGESAPVTMGHEFSGVVYAVGEGVDDIKVGQHVVVEPYIIRDDVPTGEGSNYHLSKDMNFIGLGGCGGGLSEKIAVKRRWVHPISDKIPLDQAALIEPLSVGHHAYVRSGAKAGDVALVGGAGPIGLLLAAVLKAKGIKVIITELSKARKDKARESGVADYILDPSEVDVVEEVKKLTNGEGVDVAFECTSVNKVLDTLVEACKPAANLVIVSIWSHPATVNVHSVVMKELDVRGTIAYCNDHAETIKLVEEGKINLEPFITQRIKLDKLVSEGFERLIHNNESAVKIIVNPNL</sequence>
<accession>Q5FA46</accession>
<name>BDH_NEIG1</name>
<keyword id="KW-0479">Metal-binding</keyword>
<keyword id="KW-0520">NAD</keyword>
<keyword id="KW-0560">Oxidoreductase</keyword>
<keyword id="KW-1185">Reference proteome</keyword>
<keyword id="KW-0862">Zinc</keyword>
<reference key="1">
    <citation type="submission" date="2003-03" db="EMBL/GenBank/DDBJ databases">
        <title>The complete genome sequence of Neisseria gonorrhoeae.</title>
        <authorList>
            <person name="Lewis L.A."/>
            <person name="Gillaspy A.F."/>
            <person name="McLaughlin R.E."/>
            <person name="Gipson M."/>
            <person name="Ducey T.F."/>
            <person name="Ownbey T."/>
            <person name="Hartman K."/>
            <person name="Nydick C."/>
            <person name="Carson M.B."/>
            <person name="Vaughn J."/>
            <person name="Thomson C."/>
            <person name="Song L."/>
            <person name="Lin S."/>
            <person name="Yuan X."/>
            <person name="Najar F."/>
            <person name="Zhan M."/>
            <person name="Ren Q."/>
            <person name="Zhu H."/>
            <person name="Qi S."/>
            <person name="Kenton S.M."/>
            <person name="Lai H."/>
            <person name="White J.D."/>
            <person name="Clifton S."/>
            <person name="Roe B.A."/>
            <person name="Dyer D.W."/>
        </authorList>
    </citation>
    <scope>NUCLEOTIDE SEQUENCE [LARGE SCALE GENOMIC DNA]</scope>
    <source>
        <strain>ATCC 700825 / FA 1090</strain>
    </source>
</reference>
<reference key="2">
    <citation type="journal article" date="2021" name="Mol. Biotechnol.">
        <title>Purification and characterization of (2R,3R)-2,3-butanediol dehydrogenase of the human pathogen Neisseria gonorrhoeae FA1090 produced in Escherichia coli.</title>
        <authorList>
            <person name="Tang W."/>
            <person name="Lian C."/>
            <person name="Si Y."/>
            <person name="Chang J."/>
        </authorList>
    </citation>
    <scope>IDENTIFICATION BY MASS SPECTROMETRY</scope>
    <scope>FUNCTION</scope>
    <scope>CATALYTIC ACTIVITY</scope>
    <scope>COFACTOR</scope>
    <scope>BIOPHYSICOCHEMICAL PROPERTIES</scope>
    <source>
        <strain>ATCC 700825 / FA 1090</strain>
    </source>
</reference>
<dbReference type="EC" id="1.1.1.4" evidence="3"/>
<dbReference type="EMBL" id="AE004969">
    <property type="protein sequence ID" value="AAW88941.1"/>
    <property type="molecule type" value="Genomic_DNA"/>
</dbReference>
<dbReference type="RefSeq" id="WP_003694824.1">
    <property type="nucleotide sequence ID" value="NC_002946.2"/>
</dbReference>
<dbReference type="RefSeq" id="YP_207353.1">
    <property type="nucleotide sequence ID" value="NC_002946.2"/>
</dbReference>
<dbReference type="SMR" id="Q5FA46"/>
<dbReference type="STRING" id="242231.NGO_0186"/>
<dbReference type="KEGG" id="ngo:NGO_0186"/>
<dbReference type="PATRIC" id="fig|242231.10.peg.232"/>
<dbReference type="HOGENOM" id="CLU_026673_11_0_4"/>
<dbReference type="Proteomes" id="UP000000535">
    <property type="component" value="Chromosome"/>
</dbReference>
<dbReference type="GO" id="GO:0016616">
    <property type="term" value="F:oxidoreductase activity, acting on the CH-OH group of donors, NAD or NADP as acceptor"/>
    <property type="evidence" value="ECO:0007669"/>
    <property type="project" value="UniProtKB-ARBA"/>
</dbReference>
<dbReference type="GO" id="GO:0008270">
    <property type="term" value="F:zinc ion binding"/>
    <property type="evidence" value="ECO:0007669"/>
    <property type="project" value="InterPro"/>
</dbReference>
<dbReference type="CDD" id="cd08233">
    <property type="entry name" value="butanediol_DH_like"/>
    <property type="match status" value="1"/>
</dbReference>
<dbReference type="Gene3D" id="3.90.180.10">
    <property type="entry name" value="Medium-chain alcohol dehydrogenases, catalytic domain"/>
    <property type="match status" value="1"/>
</dbReference>
<dbReference type="Gene3D" id="3.40.50.720">
    <property type="entry name" value="NAD(P)-binding Rossmann-like Domain"/>
    <property type="match status" value="1"/>
</dbReference>
<dbReference type="InterPro" id="IPR013149">
    <property type="entry name" value="ADH-like_C"/>
</dbReference>
<dbReference type="InterPro" id="IPR013154">
    <property type="entry name" value="ADH-like_N"/>
</dbReference>
<dbReference type="InterPro" id="IPR002328">
    <property type="entry name" value="ADH_Zn_CS"/>
</dbReference>
<dbReference type="InterPro" id="IPR011032">
    <property type="entry name" value="GroES-like_sf"/>
</dbReference>
<dbReference type="InterPro" id="IPR036291">
    <property type="entry name" value="NAD(P)-bd_dom_sf"/>
</dbReference>
<dbReference type="InterPro" id="IPR020843">
    <property type="entry name" value="PKS_ER"/>
</dbReference>
<dbReference type="PANTHER" id="PTHR43161:SF26">
    <property type="entry name" value="GALACTITOL 1-PHOSPHATE 5-DEHYDROGENASE"/>
    <property type="match status" value="1"/>
</dbReference>
<dbReference type="PANTHER" id="PTHR43161">
    <property type="entry name" value="SORBITOL DEHYDROGENASE"/>
    <property type="match status" value="1"/>
</dbReference>
<dbReference type="Pfam" id="PF08240">
    <property type="entry name" value="ADH_N"/>
    <property type="match status" value="1"/>
</dbReference>
<dbReference type="Pfam" id="PF00107">
    <property type="entry name" value="ADH_zinc_N"/>
    <property type="match status" value="1"/>
</dbReference>
<dbReference type="SMART" id="SM00829">
    <property type="entry name" value="PKS_ER"/>
    <property type="match status" value="1"/>
</dbReference>
<dbReference type="SUPFAM" id="SSF50129">
    <property type="entry name" value="GroES-like"/>
    <property type="match status" value="1"/>
</dbReference>
<dbReference type="SUPFAM" id="SSF51735">
    <property type="entry name" value="NAD(P)-binding Rossmann-fold domains"/>
    <property type="match status" value="1"/>
</dbReference>
<dbReference type="PROSITE" id="PS00059">
    <property type="entry name" value="ADH_ZINC"/>
    <property type="match status" value="1"/>
</dbReference>